<keyword id="KW-0963">Cytoplasm</keyword>
<keyword id="KW-0324">Glycolysis</keyword>
<keyword id="KW-0456">Lyase</keyword>
<keyword id="KW-0460">Magnesium</keyword>
<keyword id="KW-0479">Metal-binding</keyword>
<keyword id="KW-1185">Reference proteome</keyword>
<keyword id="KW-0964">Secreted</keyword>
<proteinExistence type="inferred from homology"/>
<evidence type="ECO:0000255" key="1">
    <source>
        <dbReference type="HAMAP-Rule" id="MF_00318"/>
    </source>
</evidence>
<gene>
    <name evidence="1" type="primary">eno</name>
    <name type="ordered locus">MCCL_0525</name>
</gene>
<reference key="1">
    <citation type="journal article" date="2009" name="J. Bacteriol.">
        <title>Complete genome sequence of Macrococcus caseolyticus strain JCSCS5402, reflecting the ancestral genome of the human-pathogenic staphylococci.</title>
        <authorList>
            <person name="Baba T."/>
            <person name="Kuwahara-Arai K."/>
            <person name="Uchiyama I."/>
            <person name="Takeuchi F."/>
            <person name="Ito T."/>
            <person name="Hiramatsu K."/>
        </authorList>
    </citation>
    <scope>NUCLEOTIDE SEQUENCE [LARGE SCALE GENOMIC DNA]</scope>
    <source>
        <strain>JCSC5402</strain>
    </source>
</reference>
<sequence length="434" mass="46999">MPIITDVYAREVLDSRGNPTIEVEVFTESGALGRALVPSGASTGEHEAVELRDGDKDRYMGKGVLKAVENVNEIIAPEIIEGDFSVLDQVSIDKMMIALDGTDNKGKLGANAILGVSIAVARAAADYLGVPLYKYLGGFNGTELPVPMMNIVNGGSHSDAPIAFQEFMVLPVGAPNFKEALRWGAEIFHNLAKILKGRNLSTAVGDEGGFAPTFEGTEDAVETILEAIKAAGLEPGKDVFLGFDCAASEFFENGVYDYAKFEGENGKKRTSSEQVDYLEELVDKYPIITIEDGMDENDWEGWKALTDRLGNKVQLVGDDLFVTNTKILERGINEGVGNSILIKVNQIGTLTETFEAIEMAQKAGYTAVVSHRSGETEDTTIADIAVATNAGQIKTGSLSRTDRIAKYNQLLRIEDELFETAKFKGLNAFYNLNK</sequence>
<dbReference type="EC" id="4.2.1.11" evidence="1"/>
<dbReference type="EMBL" id="AP009484">
    <property type="protein sequence ID" value="BAH17232.1"/>
    <property type="molecule type" value="Genomic_DNA"/>
</dbReference>
<dbReference type="RefSeq" id="WP_012656433.1">
    <property type="nucleotide sequence ID" value="NC_011999.1"/>
</dbReference>
<dbReference type="SMR" id="B9EAH1"/>
<dbReference type="STRING" id="458233.MCCL_0525"/>
<dbReference type="GeneID" id="61129674"/>
<dbReference type="KEGG" id="mcl:MCCL_0525"/>
<dbReference type="eggNOG" id="COG0148">
    <property type="taxonomic scope" value="Bacteria"/>
</dbReference>
<dbReference type="HOGENOM" id="CLU_031223_2_1_9"/>
<dbReference type="OrthoDB" id="9804716at2"/>
<dbReference type="UniPathway" id="UPA00109">
    <property type="reaction ID" value="UER00187"/>
</dbReference>
<dbReference type="Proteomes" id="UP000001383">
    <property type="component" value="Chromosome"/>
</dbReference>
<dbReference type="GO" id="GO:0009986">
    <property type="term" value="C:cell surface"/>
    <property type="evidence" value="ECO:0007669"/>
    <property type="project" value="UniProtKB-SubCell"/>
</dbReference>
<dbReference type="GO" id="GO:0005576">
    <property type="term" value="C:extracellular region"/>
    <property type="evidence" value="ECO:0007669"/>
    <property type="project" value="UniProtKB-SubCell"/>
</dbReference>
<dbReference type="GO" id="GO:0000015">
    <property type="term" value="C:phosphopyruvate hydratase complex"/>
    <property type="evidence" value="ECO:0007669"/>
    <property type="project" value="InterPro"/>
</dbReference>
<dbReference type="GO" id="GO:0000287">
    <property type="term" value="F:magnesium ion binding"/>
    <property type="evidence" value="ECO:0007669"/>
    <property type="project" value="UniProtKB-UniRule"/>
</dbReference>
<dbReference type="GO" id="GO:0004634">
    <property type="term" value="F:phosphopyruvate hydratase activity"/>
    <property type="evidence" value="ECO:0007669"/>
    <property type="project" value="UniProtKB-UniRule"/>
</dbReference>
<dbReference type="GO" id="GO:0006096">
    <property type="term" value="P:glycolytic process"/>
    <property type="evidence" value="ECO:0007669"/>
    <property type="project" value="UniProtKB-UniRule"/>
</dbReference>
<dbReference type="CDD" id="cd03313">
    <property type="entry name" value="enolase"/>
    <property type="match status" value="1"/>
</dbReference>
<dbReference type="FunFam" id="3.20.20.120:FF:000001">
    <property type="entry name" value="Enolase"/>
    <property type="match status" value="1"/>
</dbReference>
<dbReference type="FunFam" id="3.30.390.10:FF:000001">
    <property type="entry name" value="Enolase"/>
    <property type="match status" value="1"/>
</dbReference>
<dbReference type="Gene3D" id="3.20.20.120">
    <property type="entry name" value="Enolase-like C-terminal domain"/>
    <property type="match status" value="1"/>
</dbReference>
<dbReference type="Gene3D" id="3.30.390.10">
    <property type="entry name" value="Enolase-like, N-terminal domain"/>
    <property type="match status" value="1"/>
</dbReference>
<dbReference type="HAMAP" id="MF_00318">
    <property type="entry name" value="Enolase"/>
    <property type="match status" value="1"/>
</dbReference>
<dbReference type="InterPro" id="IPR000941">
    <property type="entry name" value="Enolase"/>
</dbReference>
<dbReference type="InterPro" id="IPR036849">
    <property type="entry name" value="Enolase-like_C_sf"/>
</dbReference>
<dbReference type="InterPro" id="IPR029017">
    <property type="entry name" value="Enolase-like_N"/>
</dbReference>
<dbReference type="InterPro" id="IPR020810">
    <property type="entry name" value="Enolase_C"/>
</dbReference>
<dbReference type="InterPro" id="IPR020809">
    <property type="entry name" value="Enolase_CS"/>
</dbReference>
<dbReference type="InterPro" id="IPR020811">
    <property type="entry name" value="Enolase_N"/>
</dbReference>
<dbReference type="NCBIfam" id="TIGR01060">
    <property type="entry name" value="eno"/>
    <property type="match status" value="1"/>
</dbReference>
<dbReference type="PANTHER" id="PTHR11902">
    <property type="entry name" value="ENOLASE"/>
    <property type="match status" value="1"/>
</dbReference>
<dbReference type="PANTHER" id="PTHR11902:SF1">
    <property type="entry name" value="ENOLASE"/>
    <property type="match status" value="1"/>
</dbReference>
<dbReference type="Pfam" id="PF00113">
    <property type="entry name" value="Enolase_C"/>
    <property type="match status" value="1"/>
</dbReference>
<dbReference type="Pfam" id="PF03952">
    <property type="entry name" value="Enolase_N"/>
    <property type="match status" value="1"/>
</dbReference>
<dbReference type="PIRSF" id="PIRSF001400">
    <property type="entry name" value="Enolase"/>
    <property type="match status" value="1"/>
</dbReference>
<dbReference type="PRINTS" id="PR00148">
    <property type="entry name" value="ENOLASE"/>
</dbReference>
<dbReference type="SFLD" id="SFLDS00001">
    <property type="entry name" value="Enolase"/>
    <property type="match status" value="1"/>
</dbReference>
<dbReference type="SFLD" id="SFLDF00002">
    <property type="entry name" value="enolase"/>
    <property type="match status" value="1"/>
</dbReference>
<dbReference type="SMART" id="SM01192">
    <property type="entry name" value="Enolase_C"/>
    <property type="match status" value="1"/>
</dbReference>
<dbReference type="SMART" id="SM01193">
    <property type="entry name" value="Enolase_N"/>
    <property type="match status" value="1"/>
</dbReference>
<dbReference type="SUPFAM" id="SSF51604">
    <property type="entry name" value="Enolase C-terminal domain-like"/>
    <property type="match status" value="1"/>
</dbReference>
<dbReference type="SUPFAM" id="SSF54826">
    <property type="entry name" value="Enolase N-terminal domain-like"/>
    <property type="match status" value="1"/>
</dbReference>
<dbReference type="PROSITE" id="PS00164">
    <property type="entry name" value="ENOLASE"/>
    <property type="match status" value="1"/>
</dbReference>
<organism>
    <name type="scientific">Macrococcus caseolyticus (strain JCSC5402)</name>
    <name type="common">Macrococcoides caseolyticum</name>
    <dbReference type="NCBI Taxonomy" id="458233"/>
    <lineage>
        <taxon>Bacteria</taxon>
        <taxon>Bacillati</taxon>
        <taxon>Bacillota</taxon>
        <taxon>Bacilli</taxon>
        <taxon>Bacillales</taxon>
        <taxon>Staphylococcaceae</taxon>
        <taxon>Macrococcoides</taxon>
    </lineage>
</organism>
<feature type="chain" id="PRO_1000189955" description="Enolase">
    <location>
        <begin position="1"/>
        <end position="434"/>
    </location>
</feature>
<feature type="active site" description="Proton donor" evidence="1">
    <location>
        <position position="207"/>
    </location>
</feature>
<feature type="active site" description="Proton acceptor" evidence="1">
    <location>
        <position position="343"/>
    </location>
</feature>
<feature type="binding site" evidence="1">
    <location>
        <position position="165"/>
    </location>
    <ligand>
        <name>(2R)-2-phosphoglycerate</name>
        <dbReference type="ChEBI" id="CHEBI:58289"/>
    </ligand>
</feature>
<feature type="binding site" evidence="1">
    <location>
        <position position="244"/>
    </location>
    <ligand>
        <name>Mg(2+)</name>
        <dbReference type="ChEBI" id="CHEBI:18420"/>
    </ligand>
</feature>
<feature type="binding site" evidence="1">
    <location>
        <position position="291"/>
    </location>
    <ligand>
        <name>Mg(2+)</name>
        <dbReference type="ChEBI" id="CHEBI:18420"/>
    </ligand>
</feature>
<feature type="binding site" evidence="1">
    <location>
        <position position="318"/>
    </location>
    <ligand>
        <name>Mg(2+)</name>
        <dbReference type="ChEBI" id="CHEBI:18420"/>
    </ligand>
</feature>
<feature type="binding site" evidence="1">
    <location>
        <position position="343"/>
    </location>
    <ligand>
        <name>(2R)-2-phosphoglycerate</name>
        <dbReference type="ChEBI" id="CHEBI:58289"/>
    </ligand>
</feature>
<feature type="binding site" evidence="1">
    <location>
        <position position="372"/>
    </location>
    <ligand>
        <name>(2R)-2-phosphoglycerate</name>
        <dbReference type="ChEBI" id="CHEBI:58289"/>
    </ligand>
</feature>
<feature type="binding site" evidence="1">
    <location>
        <position position="373"/>
    </location>
    <ligand>
        <name>(2R)-2-phosphoglycerate</name>
        <dbReference type="ChEBI" id="CHEBI:58289"/>
    </ligand>
</feature>
<feature type="binding site" evidence="1">
    <location>
        <position position="394"/>
    </location>
    <ligand>
        <name>(2R)-2-phosphoglycerate</name>
        <dbReference type="ChEBI" id="CHEBI:58289"/>
    </ligand>
</feature>
<accession>B9EAH1</accession>
<name>ENO_MACCJ</name>
<protein>
    <recommendedName>
        <fullName evidence="1">Enolase</fullName>
        <ecNumber evidence="1">4.2.1.11</ecNumber>
    </recommendedName>
    <alternativeName>
        <fullName evidence="1">2-phospho-D-glycerate hydro-lyase</fullName>
    </alternativeName>
    <alternativeName>
        <fullName evidence="1">2-phosphoglycerate dehydratase</fullName>
    </alternativeName>
</protein>
<comment type="function">
    <text evidence="1">Catalyzes the reversible conversion of 2-phosphoglycerate (2-PG) into phosphoenolpyruvate (PEP). It is essential for the degradation of carbohydrates via glycolysis.</text>
</comment>
<comment type="catalytic activity">
    <reaction evidence="1">
        <text>(2R)-2-phosphoglycerate = phosphoenolpyruvate + H2O</text>
        <dbReference type="Rhea" id="RHEA:10164"/>
        <dbReference type="ChEBI" id="CHEBI:15377"/>
        <dbReference type="ChEBI" id="CHEBI:58289"/>
        <dbReference type="ChEBI" id="CHEBI:58702"/>
        <dbReference type="EC" id="4.2.1.11"/>
    </reaction>
</comment>
<comment type="cofactor">
    <cofactor evidence="1">
        <name>Mg(2+)</name>
        <dbReference type="ChEBI" id="CHEBI:18420"/>
    </cofactor>
    <text evidence="1">Binds a second Mg(2+) ion via substrate during catalysis.</text>
</comment>
<comment type="pathway">
    <text evidence="1">Carbohydrate degradation; glycolysis; pyruvate from D-glyceraldehyde 3-phosphate: step 4/5.</text>
</comment>
<comment type="subcellular location">
    <subcellularLocation>
        <location evidence="1">Cytoplasm</location>
    </subcellularLocation>
    <subcellularLocation>
        <location evidence="1">Secreted</location>
    </subcellularLocation>
    <subcellularLocation>
        <location evidence="1">Cell surface</location>
    </subcellularLocation>
    <text evidence="1">Fractions of enolase are present in both the cytoplasm and on the cell surface.</text>
</comment>
<comment type="similarity">
    <text evidence="1">Belongs to the enolase family.</text>
</comment>